<reference key="1">
    <citation type="journal article" date="2001" name="Nature">
        <title>Genome sequence of Yersinia pestis, the causative agent of plague.</title>
        <authorList>
            <person name="Parkhill J."/>
            <person name="Wren B.W."/>
            <person name="Thomson N.R."/>
            <person name="Titball R.W."/>
            <person name="Holden M.T.G."/>
            <person name="Prentice M.B."/>
            <person name="Sebaihia M."/>
            <person name="James K.D."/>
            <person name="Churcher C.M."/>
            <person name="Mungall K.L."/>
            <person name="Baker S."/>
            <person name="Basham D."/>
            <person name="Bentley S.D."/>
            <person name="Brooks K."/>
            <person name="Cerdeno-Tarraga A.-M."/>
            <person name="Chillingworth T."/>
            <person name="Cronin A."/>
            <person name="Davies R.M."/>
            <person name="Davis P."/>
            <person name="Dougan G."/>
            <person name="Feltwell T."/>
            <person name="Hamlin N."/>
            <person name="Holroyd S."/>
            <person name="Jagels K."/>
            <person name="Karlyshev A.V."/>
            <person name="Leather S."/>
            <person name="Moule S."/>
            <person name="Oyston P.C.F."/>
            <person name="Quail M.A."/>
            <person name="Rutherford K.M."/>
            <person name="Simmonds M."/>
            <person name="Skelton J."/>
            <person name="Stevens K."/>
            <person name="Whitehead S."/>
            <person name="Barrell B.G."/>
        </authorList>
    </citation>
    <scope>NUCLEOTIDE SEQUENCE [LARGE SCALE GENOMIC DNA]</scope>
    <source>
        <strain>CO-92 / Biovar Orientalis</strain>
    </source>
</reference>
<reference key="2">
    <citation type="journal article" date="2002" name="J. Bacteriol.">
        <title>Genome sequence of Yersinia pestis KIM.</title>
        <authorList>
            <person name="Deng W."/>
            <person name="Burland V."/>
            <person name="Plunkett G. III"/>
            <person name="Boutin A."/>
            <person name="Mayhew G.F."/>
            <person name="Liss P."/>
            <person name="Perna N.T."/>
            <person name="Rose D.J."/>
            <person name="Mau B."/>
            <person name="Zhou S."/>
            <person name="Schwartz D.C."/>
            <person name="Fetherston J.D."/>
            <person name="Lindler L.E."/>
            <person name="Brubaker R.R."/>
            <person name="Plano G.V."/>
            <person name="Straley S.C."/>
            <person name="McDonough K.A."/>
            <person name="Nilles M.L."/>
            <person name="Matson J.S."/>
            <person name="Blattner F.R."/>
            <person name="Perry R.D."/>
        </authorList>
    </citation>
    <scope>NUCLEOTIDE SEQUENCE [LARGE SCALE GENOMIC DNA]</scope>
    <source>
        <strain>KIM10+ / Biovar Mediaevalis</strain>
    </source>
</reference>
<reference key="3">
    <citation type="journal article" date="2004" name="DNA Res.">
        <title>Complete genome sequence of Yersinia pestis strain 91001, an isolate avirulent to humans.</title>
        <authorList>
            <person name="Song Y."/>
            <person name="Tong Z."/>
            <person name="Wang J."/>
            <person name="Wang L."/>
            <person name="Guo Z."/>
            <person name="Han Y."/>
            <person name="Zhang J."/>
            <person name="Pei D."/>
            <person name="Zhou D."/>
            <person name="Qin H."/>
            <person name="Pang X."/>
            <person name="Han Y."/>
            <person name="Zhai J."/>
            <person name="Li M."/>
            <person name="Cui B."/>
            <person name="Qi Z."/>
            <person name="Jin L."/>
            <person name="Dai R."/>
            <person name="Chen F."/>
            <person name="Li S."/>
            <person name="Ye C."/>
            <person name="Du Z."/>
            <person name="Lin W."/>
            <person name="Wang J."/>
            <person name="Yu J."/>
            <person name="Yang H."/>
            <person name="Wang J."/>
            <person name="Huang P."/>
            <person name="Yang R."/>
        </authorList>
    </citation>
    <scope>NUCLEOTIDE SEQUENCE [LARGE SCALE GENOMIC DNA]</scope>
    <source>
        <strain>91001 / Biovar Mediaevalis</strain>
    </source>
</reference>
<comment type="function">
    <text evidence="1">Responsible for synthesis of pseudouridine from uracil-2605 in 23S ribosomal RNA.</text>
</comment>
<comment type="catalytic activity">
    <reaction>
        <text>uridine(2605) in 23S rRNA = pseudouridine(2605) in 23S rRNA</text>
        <dbReference type="Rhea" id="RHEA:42520"/>
        <dbReference type="Rhea" id="RHEA-COMP:10095"/>
        <dbReference type="Rhea" id="RHEA-COMP:10096"/>
        <dbReference type="ChEBI" id="CHEBI:65314"/>
        <dbReference type="ChEBI" id="CHEBI:65315"/>
        <dbReference type="EC" id="5.4.99.22"/>
    </reaction>
</comment>
<comment type="similarity">
    <text evidence="4">Belongs to the pseudouridine synthase RsuA family.</text>
</comment>
<comment type="sequence caution" evidence="4">
    <conflict type="erroneous initiation">
        <sequence resource="EMBL-CDS" id="AAM85618"/>
    </conflict>
</comment>
<comment type="sequence caution" evidence="4">
    <conflict type="erroneous initiation">
        <sequence resource="EMBL-CDS" id="AAS62226"/>
    </conflict>
</comment>
<proteinExistence type="inferred from homology"/>
<feature type="chain" id="PRO_0000099999" description="Ribosomal large subunit pseudouridine synthase B">
    <location>
        <begin position="1"/>
        <end position="318"/>
    </location>
</feature>
<feature type="domain" description="S4 RNA-binding" evidence="2">
    <location>
        <begin position="3"/>
        <end position="75"/>
    </location>
</feature>
<feature type="region of interest" description="Disordered" evidence="3">
    <location>
        <begin position="271"/>
        <end position="318"/>
    </location>
</feature>
<feature type="active site" description="Nucleophile" evidence="1">
    <location>
        <position position="110"/>
    </location>
</feature>
<evidence type="ECO:0000250" key="1"/>
<evidence type="ECO:0000255" key="2">
    <source>
        <dbReference type="PROSITE-ProRule" id="PRU00182"/>
    </source>
</evidence>
<evidence type="ECO:0000256" key="3">
    <source>
        <dbReference type="SAM" id="MobiDB-lite"/>
    </source>
</evidence>
<evidence type="ECO:0000305" key="4"/>
<dbReference type="EC" id="5.4.99.22"/>
<dbReference type="EMBL" id="AL590842">
    <property type="protein sequence ID" value="CAL20842.1"/>
    <property type="molecule type" value="Genomic_DNA"/>
</dbReference>
<dbReference type="EMBL" id="AE009952">
    <property type="protein sequence ID" value="AAM85618.1"/>
    <property type="status" value="ALT_INIT"/>
    <property type="molecule type" value="Genomic_DNA"/>
</dbReference>
<dbReference type="EMBL" id="AE017042">
    <property type="protein sequence ID" value="AAS62226.1"/>
    <property type="status" value="ALT_INIT"/>
    <property type="molecule type" value="Genomic_DNA"/>
</dbReference>
<dbReference type="PIR" id="AG0269">
    <property type="entry name" value="AG0269"/>
</dbReference>
<dbReference type="SMR" id="Q8ZEG0"/>
<dbReference type="STRING" id="214092.YPO2213"/>
<dbReference type="PaxDb" id="214092-YPO2213"/>
<dbReference type="DNASU" id="1147001"/>
<dbReference type="EnsemblBacteria" id="AAS62226">
    <property type="protein sequence ID" value="AAS62226"/>
    <property type="gene ID" value="YP_2010"/>
</dbReference>
<dbReference type="KEGG" id="ype:YPO2213"/>
<dbReference type="KEGG" id="ypj:CH55_303"/>
<dbReference type="KEGG" id="ypk:y2054"/>
<dbReference type="KEGG" id="ypl:CH46_2900"/>
<dbReference type="KEGG" id="ypm:YP_2010"/>
<dbReference type="KEGG" id="ypv:BZ15_1328"/>
<dbReference type="KEGG" id="ypw:CH59_3908"/>
<dbReference type="PATRIC" id="fig|632.151.peg.1299"/>
<dbReference type="eggNOG" id="COG1187">
    <property type="taxonomic scope" value="Bacteria"/>
</dbReference>
<dbReference type="HOGENOM" id="CLU_024979_1_1_6"/>
<dbReference type="OMA" id="EWINNGW"/>
<dbReference type="Proteomes" id="UP000000815">
    <property type="component" value="Chromosome"/>
</dbReference>
<dbReference type="Proteomes" id="UP000001019">
    <property type="component" value="Chromosome"/>
</dbReference>
<dbReference type="Proteomes" id="UP000002490">
    <property type="component" value="Chromosome"/>
</dbReference>
<dbReference type="GO" id="GO:0160139">
    <property type="term" value="F:23S rRNA pseudouridine(2605) synthase activity"/>
    <property type="evidence" value="ECO:0007669"/>
    <property type="project" value="UniProtKB-EC"/>
</dbReference>
<dbReference type="GO" id="GO:0003723">
    <property type="term" value="F:RNA binding"/>
    <property type="evidence" value="ECO:0007669"/>
    <property type="project" value="UniProtKB-KW"/>
</dbReference>
<dbReference type="GO" id="GO:0000455">
    <property type="term" value="P:enzyme-directed rRNA pseudouridine synthesis"/>
    <property type="evidence" value="ECO:0007669"/>
    <property type="project" value="UniProtKB-ARBA"/>
</dbReference>
<dbReference type="CDD" id="cd02556">
    <property type="entry name" value="PseudoU_synth_RluB"/>
    <property type="match status" value="1"/>
</dbReference>
<dbReference type="CDD" id="cd00165">
    <property type="entry name" value="S4"/>
    <property type="match status" value="1"/>
</dbReference>
<dbReference type="FunFam" id="3.10.290.10:FF:000003">
    <property type="entry name" value="Pseudouridine synthase"/>
    <property type="match status" value="1"/>
</dbReference>
<dbReference type="FunFam" id="3.30.2350.10:FF:000002">
    <property type="entry name" value="Pseudouridine synthase"/>
    <property type="match status" value="1"/>
</dbReference>
<dbReference type="FunFam" id="3.30.70.1560:FF:000001">
    <property type="entry name" value="Pseudouridine synthase"/>
    <property type="match status" value="1"/>
</dbReference>
<dbReference type="FunFam" id="3.30.70.580:FF:000009">
    <property type="entry name" value="Pseudouridine synthase"/>
    <property type="match status" value="1"/>
</dbReference>
<dbReference type="Gene3D" id="3.30.2350.10">
    <property type="entry name" value="Pseudouridine synthase"/>
    <property type="match status" value="1"/>
</dbReference>
<dbReference type="Gene3D" id="3.10.290.10">
    <property type="entry name" value="RNA-binding S4 domain"/>
    <property type="match status" value="1"/>
</dbReference>
<dbReference type="InterPro" id="IPR020103">
    <property type="entry name" value="PsdUridine_synth_cat_dom_sf"/>
</dbReference>
<dbReference type="InterPro" id="IPR006145">
    <property type="entry name" value="PsdUridine_synth_RsuA/RluA"/>
</dbReference>
<dbReference type="InterPro" id="IPR000748">
    <property type="entry name" value="PsdUridine_synth_RsuA/RluB/E/F"/>
</dbReference>
<dbReference type="InterPro" id="IPR018496">
    <property type="entry name" value="PsdUridine_synth_RsuA/RluB_CS"/>
</dbReference>
<dbReference type="InterPro" id="IPR050343">
    <property type="entry name" value="RsuA_PseudoU_synthase"/>
</dbReference>
<dbReference type="InterPro" id="IPR002942">
    <property type="entry name" value="S4_RNA-bd"/>
</dbReference>
<dbReference type="InterPro" id="IPR036986">
    <property type="entry name" value="S4_RNA-bd_sf"/>
</dbReference>
<dbReference type="NCBIfam" id="NF007976">
    <property type="entry name" value="PRK10700.1"/>
    <property type="match status" value="1"/>
</dbReference>
<dbReference type="NCBIfam" id="TIGR00093">
    <property type="entry name" value="pseudouridine synthase"/>
    <property type="match status" value="1"/>
</dbReference>
<dbReference type="PANTHER" id="PTHR47683">
    <property type="entry name" value="PSEUDOURIDINE SYNTHASE FAMILY PROTEIN-RELATED"/>
    <property type="match status" value="1"/>
</dbReference>
<dbReference type="PANTHER" id="PTHR47683:SF3">
    <property type="entry name" value="RIBOSOMAL LARGE SUBUNIT PSEUDOURIDINE SYNTHASE B"/>
    <property type="match status" value="1"/>
</dbReference>
<dbReference type="Pfam" id="PF00849">
    <property type="entry name" value="PseudoU_synth_2"/>
    <property type="match status" value="1"/>
</dbReference>
<dbReference type="Pfam" id="PF01479">
    <property type="entry name" value="S4"/>
    <property type="match status" value="1"/>
</dbReference>
<dbReference type="SMART" id="SM00363">
    <property type="entry name" value="S4"/>
    <property type="match status" value="1"/>
</dbReference>
<dbReference type="SUPFAM" id="SSF55174">
    <property type="entry name" value="Alpha-L RNA-binding motif"/>
    <property type="match status" value="1"/>
</dbReference>
<dbReference type="SUPFAM" id="SSF55120">
    <property type="entry name" value="Pseudouridine synthase"/>
    <property type="match status" value="1"/>
</dbReference>
<dbReference type="PROSITE" id="PS01149">
    <property type="entry name" value="PSI_RSU"/>
    <property type="match status" value="1"/>
</dbReference>
<dbReference type="PROSITE" id="PS50889">
    <property type="entry name" value="S4"/>
    <property type="match status" value="1"/>
</dbReference>
<name>RLUB_YERPE</name>
<sequence>MGEKLQKILARAGHGSRREIEAIIQQGRVSVDGKVSKLGDRVEVTQSTKIRLDGHLLSIKESEENVCRVLAYYKPEGELCTRNDPEGRPTVFDRLPKLRGSRWVAVGRLDVNTSGLLLFTTDGELANRLMHPSREVEREYAVRVFGQIDDDKIKQLSRGVQLEDGPAAFRTISYQGGEGINQWYNVTLTEGRNREVRRLWEAVGVQVSRLIRVRYGDINLPKGLPRGGWTELDLKATNYLRELVELDVETVSKLPVEKDRRRVKANQIRRAVKRHTEVSGRQVAGRQGSARKGSTRQNVGNAAPAATASRRSGPKKRG</sequence>
<organism>
    <name type="scientific">Yersinia pestis</name>
    <dbReference type="NCBI Taxonomy" id="632"/>
    <lineage>
        <taxon>Bacteria</taxon>
        <taxon>Pseudomonadati</taxon>
        <taxon>Pseudomonadota</taxon>
        <taxon>Gammaproteobacteria</taxon>
        <taxon>Enterobacterales</taxon>
        <taxon>Yersiniaceae</taxon>
        <taxon>Yersinia</taxon>
    </lineage>
</organism>
<gene>
    <name type="primary">rluB</name>
    <name type="ordered locus">YPO2213</name>
    <name type="ordered locus">y2054</name>
    <name type="ordered locus">YP_2010</name>
</gene>
<accession>Q8ZEG0</accession>
<accession>Q0WEV4</accession>
<accession>Q8D0J6</accession>
<protein>
    <recommendedName>
        <fullName>Ribosomal large subunit pseudouridine synthase B</fullName>
        <ecNumber>5.4.99.22</ecNumber>
    </recommendedName>
    <alternativeName>
        <fullName>23S rRNA pseudouridine(2605) synthase</fullName>
    </alternativeName>
    <alternativeName>
        <fullName>rRNA pseudouridylate synthase B</fullName>
    </alternativeName>
    <alternativeName>
        <fullName>rRNA-uridine isomerase B</fullName>
    </alternativeName>
</protein>
<keyword id="KW-0413">Isomerase</keyword>
<keyword id="KW-1185">Reference proteome</keyword>
<keyword id="KW-0694">RNA-binding</keyword>
<keyword id="KW-0698">rRNA processing</keyword>